<accession>B2RIF2</accession>
<protein>
    <recommendedName>
        <fullName evidence="1">UDP-N-acetylmuramate--L-alanine ligase</fullName>
        <ecNumber evidence="1">6.3.2.8</ecNumber>
    </recommendedName>
    <alternativeName>
        <fullName evidence="1">UDP-N-acetylmuramoyl-L-alanine synthetase</fullName>
    </alternativeName>
</protein>
<reference key="1">
    <citation type="journal article" date="2008" name="DNA Res.">
        <title>Determination of the genome sequence of Porphyromonas gingivalis strain ATCC 33277 and genomic comparison with strain W83 revealed extensive genome rearrangements in P. gingivalis.</title>
        <authorList>
            <person name="Naito M."/>
            <person name="Hirakawa H."/>
            <person name="Yamashita A."/>
            <person name="Ohara N."/>
            <person name="Shoji M."/>
            <person name="Yukitake H."/>
            <person name="Nakayama K."/>
            <person name="Toh H."/>
            <person name="Yoshimura F."/>
            <person name="Kuhara S."/>
            <person name="Hattori M."/>
            <person name="Hayashi T."/>
            <person name="Nakayama K."/>
        </authorList>
    </citation>
    <scope>NUCLEOTIDE SEQUENCE [LARGE SCALE GENOMIC DNA]</scope>
    <source>
        <strain>ATCC 33277 / DSM 20709 / CIP 103683 / JCM 12257 / NCTC 11834 / 2561</strain>
    </source>
</reference>
<sequence length="456" mass="50937">MKRVYFIGIGGIGMSAIARYFHARGFNVCGYDLTPSPITDQLIKEGIEVHFSDDLNMIPKAFFSPTDSLIVYTPAVPADHSELTYFRSNGYRVVKRAEILGEITLIERALCVAGTHGKTTTSTLLAHLLKQSHVDCNAFLGGISNNYQSNLLLSDKSDLVVVEADEFDRSFHHLKPFMAIITSADPDHMDIYGTAENYRDSFEHFTSLIQSGGALVLKYGAPVNPRLGSDVSLFTYSSDDRQADYFASDITIRDGRLFFTWHYPGGQLEEVELGVPVHINVENAVAAMAIAHLNGVTVEELRSGIASFKGSHRRFEKVLDTERVVLIDDYAHHPVELDAAIRSVREIYSRKHIMGIFQPHLYSRTADFYQDFARSLSMLDEVVLLDIYPARELPLPGVTSRLILDLIENPNKTLVSKNDLLDYLHGNEIPDVVLILGAGDIDRLVIPVKQYLQTLC</sequence>
<name>MURC_PORG3</name>
<comment type="function">
    <text evidence="1">Cell wall formation.</text>
</comment>
<comment type="catalytic activity">
    <reaction evidence="1">
        <text>UDP-N-acetyl-alpha-D-muramate + L-alanine + ATP = UDP-N-acetyl-alpha-D-muramoyl-L-alanine + ADP + phosphate + H(+)</text>
        <dbReference type="Rhea" id="RHEA:23372"/>
        <dbReference type="ChEBI" id="CHEBI:15378"/>
        <dbReference type="ChEBI" id="CHEBI:30616"/>
        <dbReference type="ChEBI" id="CHEBI:43474"/>
        <dbReference type="ChEBI" id="CHEBI:57972"/>
        <dbReference type="ChEBI" id="CHEBI:70757"/>
        <dbReference type="ChEBI" id="CHEBI:83898"/>
        <dbReference type="ChEBI" id="CHEBI:456216"/>
        <dbReference type="EC" id="6.3.2.8"/>
    </reaction>
</comment>
<comment type="pathway">
    <text evidence="1">Cell wall biogenesis; peptidoglycan biosynthesis.</text>
</comment>
<comment type="subcellular location">
    <subcellularLocation>
        <location evidence="1">Cytoplasm</location>
    </subcellularLocation>
</comment>
<comment type="similarity">
    <text evidence="1">Belongs to the MurCDEF family.</text>
</comment>
<organism>
    <name type="scientific">Porphyromonas gingivalis (strain ATCC 33277 / DSM 20709 / CIP 103683 / JCM 12257 / NCTC 11834 / 2561)</name>
    <dbReference type="NCBI Taxonomy" id="431947"/>
    <lineage>
        <taxon>Bacteria</taxon>
        <taxon>Pseudomonadati</taxon>
        <taxon>Bacteroidota</taxon>
        <taxon>Bacteroidia</taxon>
        <taxon>Bacteroidales</taxon>
        <taxon>Porphyromonadaceae</taxon>
        <taxon>Porphyromonas</taxon>
    </lineage>
</organism>
<gene>
    <name evidence="1" type="primary">murC</name>
    <name type="ordered locus">PGN_0628</name>
</gene>
<evidence type="ECO:0000255" key="1">
    <source>
        <dbReference type="HAMAP-Rule" id="MF_00046"/>
    </source>
</evidence>
<dbReference type="EC" id="6.3.2.8" evidence="1"/>
<dbReference type="EMBL" id="AP009380">
    <property type="protein sequence ID" value="BAG33147.1"/>
    <property type="molecule type" value="Genomic_DNA"/>
</dbReference>
<dbReference type="RefSeq" id="WP_012457660.1">
    <property type="nucleotide sequence ID" value="NC_010729.1"/>
</dbReference>
<dbReference type="SMR" id="B2RIF2"/>
<dbReference type="GeneID" id="29255854"/>
<dbReference type="KEGG" id="pgn:PGN_0628"/>
<dbReference type="eggNOG" id="COG0773">
    <property type="taxonomic scope" value="Bacteria"/>
</dbReference>
<dbReference type="HOGENOM" id="CLU_028104_2_2_10"/>
<dbReference type="OrthoDB" id="9804126at2"/>
<dbReference type="BioCyc" id="PGIN431947:G1G2V-689-MONOMER"/>
<dbReference type="UniPathway" id="UPA00219"/>
<dbReference type="Proteomes" id="UP000008842">
    <property type="component" value="Chromosome"/>
</dbReference>
<dbReference type="GO" id="GO:0005737">
    <property type="term" value="C:cytoplasm"/>
    <property type="evidence" value="ECO:0007669"/>
    <property type="project" value="UniProtKB-SubCell"/>
</dbReference>
<dbReference type="GO" id="GO:0005524">
    <property type="term" value="F:ATP binding"/>
    <property type="evidence" value="ECO:0007669"/>
    <property type="project" value="UniProtKB-UniRule"/>
</dbReference>
<dbReference type="GO" id="GO:0008763">
    <property type="term" value="F:UDP-N-acetylmuramate-L-alanine ligase activity"/>
    <property type="evidence" value="ECO:0007669"/>
    <property type="project" value="UniProtKB-UniRule"/>
</dbReference>
<dbReference type="GO" id="GO:0051301">
    <property type="term" value="P:cell division"/>
    <property type="evidence" value="ECO:0007669"/>
    <property type="project" value="UniProtKB-KW"/>
</dbReference>
<dbReference type="GO" id="GO:0071555">
    <property type="term" value="P:cell wall organization"/>
    <property type="evidence" value="ECO:0007669"/>
    <property type="project" value="UniProtKB-KW"/>
</dbReference>
<dbReference type="GO" id="GO:0009252">
    <property type="term" value="P:peptidoglycan biosynthetic process"/>
    <property type="evidence" value="ECO:0007669"/>
    <property type="project" value="UniProtKB-UniRule"/>
</dbReference>
<dbReference type="GO" id="GO:0008360">
    <property type="term" value="P:regulation of cell shape"/>
    <property type="evidence" value="ECO:0007669"/>
    <property type="project" value="UniProtKB-KW"/>
</dbReference>
<dbReference type="Gene3D" id="3.90.190.20">
    <property type="entry name" value="Mur ligase, C-terminal domain"/>
    <property type="match status" value="1"/>
</dbReference>
<dbReference type="Gene3D" id="3.40.1190.10">
    <property type="entry name" value="Mur-like, catalytic domain"/>
    <property type="match status" value="1"/>
</dbReference>
<dbReference type="Gene3D" id="3.40.50.720">
    <property type="entry name" value="NAD(P)-binding Rossmann-like Domain"/>
    <property type="match status" value="1"/>
</dbReference>
<dbReference type="HAMAP" id="MF_00046">
    <property type="entry name" value="MurC"/>
    <property type="match status" value="1"/>
</dbReference>
<dbReference type="InterPro" id="IPR036565">
    <property type="entry name" value="Mur-like_cat_sf"/>
</dbReference>
<dbReference type="InterPro" id="IPR004101">
    <property type="entry name" value="Mur_ligase_C"/>
</dbReference>
<dbReference type="InterPro" id="IPR036615">
    <property type="entry name" value="Mur_ligase_C_dom_sf"/>
</dbReference>
<dbReference type="InterPro" id="IPR013221">
    <property type="entry name" value="Mur_ligase_cen"/>
</dbReference>
<dbReference type="InterPro" id="IPR000713">
    <property type="entry name" value="Mur_ligase_N"/>
</dbReference>
<dbReference type="InterPro" id="IPR050061">
    <property type="entry name" value="MurCDEF_pg_biosynth"/>
</dbReference>
<dbReference type="InterPro" id="IPR005758">
    <property type="entry name" value="UDP-N-AcMur_Ala_ligase_MurC"/>
</dbReference>
<dbReference type="NCBIfam" id="TIGR01082">
    <property type="entry name" value="murC"/>
    <property type="match status" value="1"/>
</dbReference>
<dbReference type="PANTHER" id="PTHR43445:SF3">
    <property type="entry name" value="UDP-N-ACETYLMURAMATE--L-ALANINE LIGASE"/>
    <property type="match status" value="1"/>
</dbReference>
<dbReference type="PANTHER" id="PTHR43445">
    <property type="entry name" value="UDP-N-ACETYLMURAMATE--L-ALANINE LIGASE-RELATED"/>
    <property type="match status" value="1"/>
</dbReference>
<dbReference type="Pfam" id="PF01225">
    <property type="entry name" value="Mur_ligase"/>
    <property type="match status" value="1"/>
</dbReference>
<dbReference type="Pfam" id="PF02875">
    <property type="entry name" value="Mur_ligase_C"/>
    <property type="match status" value="1"/>
</dbReference>
<dbReference type="Pfam" id="PF08245">
    <property type="entry name" value="Mur_ligase_M"/>
    <property type="match status" value="1"/>
</dbReference>
<dbReference type="SUPFAM" id="SSF51984">
    <property type="entry name" value="MurCD N-terminal domain"/>
    <property type="match status" value="1"/>
</dbReference>
<dbReference type="SUPFAM" id="SSF53623">
    <property type="entry name" value="MurD-like peptide ligases, catalytic domain"/>
    <property type="match status" value="1"/>
</dbReference>
<dbReference type="SUPFAM" id="SSF53244">
    <property type="entry name" value="MurD-like peptide ligases, peptide-binding domain"/>
    <property type="match status" value="1"/>
</dbReference>
<keyword id="KW-0067">ATP-binding</keyword>
<keyword id="KW-0131">Cell cycle</keyword>
<keyword id="KW-0132">Cell division</keyword>
<keyword id="KW-0133">Cell shape</keyword>
<keyword id="KW-0961">Cell wall biogenesis/degradation</keyword>
<keyword id="KW-0963">Cytoplasm</keyword>
<keyword id="KW-0436">Ligase</keyword>
<keyword id="KW-0547">Nucleotide-binding</keyword>
<keyword id="KW-0573">Peptidoglycan synthesis</keyword>
<feature type="chain" id="PRO_1000091122" description="UDP-N-acetylmuramate--L-alanine ligase">
    <location>
        <begin position="1"/>
        <end position="456"/>
    </location>
</feature>
<feature type="binding site" evidence="1">
    <location>
        <begin position="114"/>
        <end position="120"/>
    </location>
    <ligand>
        <name>ATP</name>
        <dbReference type="ChEBI" id="CHEBI:30616"/>
    </ligand>
</feature>
<proteinExistence type="inferred from homology"/>